<accession>C6E870</accession>
<organism>
    <name type="scientific">Geobacter sp. (strain M21)</name>
    <dbReference type="NCBI Taxonomy" id="443144"/>
    <lineage>
        <taxon>Bacteria</taxon>
        <taxon>Pseudomonadati</taxon>
        <taxon>Thermodesulfobacteriota</taxon>
        <taxon>Desulfuromonadia</taxon>
        <taxon>Geobacterales</taxon>
        <taxon>Geobacteraceae</taxon>
        <taxon>Geobacter</taxon>
    </lineage>
</organism>
<reference key="1">
    <citation type="submission" date="2009-07" db="EMBL/GenBank/DDBJ databases">
        <title>Complete sequence of Geobacter sp. M21.</title>
        <authorList>
            <consortium name="US DOE Joint Genome Institute"/>
            <person name="Lucas S."/>
            <person name="Copeland A."/>
            <person name="Lapidus A."/>
            <person name="Glavina del Rio T."/>
            <person name="Dalin E."/>
            <person name="Tice H."/>
            <person name="Bruce D."/>
            <person name="Goodwin L."/>
            <person name="Pitluck S."/>
            <person name="Saunders E."/>
            <person name="Brettin T."/>
            <person name="Detter J.C."/>
            <person name="Han C."/>
            <person name="Larimer F."/>
            <person name="Land M."/>
            <person name="Hauser L."/>
            <person name="Kyrpides N."/>
            <person name="Ovchinnikova G."/>
            <person name="Lovley D."/>
        </authorList>
    </citation>
    <scope>NUCLEOTIDE SEQUENCE [LARGE SCALE GENOMIC DNA]</scope>
    <source>
        <strain>M21</strain>
    </source>
</reference>
<protein>
    <recommendedName>
        <fullName evidence="1">UPF0178 protein GM21_2006</fullName>
    </recommendedName>
</protein>
<name>Y2006_GEOSM</name>
<sequence length="154" mass="16932">MKIWIDADACPRVVKEIVSRASERLKVPVCLVANTDLSRAHTSLVTSVRVKAGFDVADDYIAENAEACDLVITADIPLAARVVEKGGVALDPRGELYTEENVGERLSYRNLMAELRTDGMLLGGPAQLGLTDRNRFASALDRLLTKMVREHRPQ</sequence>
<gene>
    <name type="ordered locus">GM21_2006</name>
</gene>
<dbReference type="EMBL" id="CP001661">
    <property type="protein sequence ID" value="ACT18058.1"/>
    <property type="molecule type" value="Genomic_DNA"/>
</dbReference>
<dbReference type="STRING" id="443144.GM21_2006"/>
<dbReference type="KEGG" id="gem:GM21_2006"/>
<dbReference type="eggNOG" id="COG1671">
    <property type="taxonomic scope" value="Bacteria"/>
</dbReference>
<dbReference type="HOGENOM" id="CLU_106619_2_1_7"/>
<dbReference type="OrthoDB" id="9798918at2"/>
<dbReference type="CDD" id="cd18720">
    <property type="entry name" value="PIN_YqxD-like"/>
    <property type="match status" value="1"/>
</dbReference>
<dbReference type="HAMAP" id="MF_00489">
    <property type="entry name" value="UPF0178"/>
    <property type="match status" value="1"/>
</dbReference>
<dbReference type="InterPro" id="IPR003791">
    <property type="entry name" value="UPF0178"/>
</dbReference>
<dbReference type="NCBIfam" id="NF001095">
    <property type="entry name" value="PRK00124.1"/>
    <property type="match status" value="1"/>
</dbReference>
<dbReference type="PANTHER" id="PTHR35146">
    <property type="entry name" value="UPF0178 PROTEIN YAII"/>
    <property type="match status" value="1"/>
</dbReference>
<dbReference type="PANTHER" id="PTHR35146:SF1">
    <property type="entry name" value="UPF0178 PROTEIN YAII"/>
    <property type="match status" value="1"/>
</dbReference>
<dbReference type="Pfam" id="PF02639">
    <property type="entry name" value="DUF188"/>
    <property type="match status" value="1"/>
</dbReference>
<proteinExistence type="inferred from homology"/>
<evidence type="ECO:0000255" key="1">
    <source>
        <dbReference type="HAMAP-Rule" id="MF_00489"/>
    </source>
</evidence>
<feature type="chain" id="PRO_1000206455" description="UPF0178 protein GM21_2006">
    <location>
        <begin position="1"/>
        <end position="154"/>
    </location>
</feature>
<comment type="similarity">
    <text evidence="1">Belongs to the UPF0178 family.</text>
</comment>